<accession>A2PYH4</accession>
<accession>B1B0B6</accession>
<accession>Q8N9Q0</accession>
<evidence type="ECO:0000250" key="1">
    <source>
        <dbReference type="UniProtKB" id="D3Z4R1"/>
    </source>
</evidence>
<evidence type="ECO:0000250" key="2">
    <source>
        <dbReference type="UniProtKB" id="P51979"/>
    </source>
</evidence>
<evidence type="ECO:0000255" key="3">
    <source>
        <dbReference type="PROSITE-ProRule" id="PRU00541"/>
    </source>
</evidence>
<evidence type="ECO:0000255" key="4">
    <source>
        <dbReference type="PROSITE-ProRule" id="PRU00542"/>
    </source>
</evidence>
<evidence type="ECO:0000256" key="5">
    <source>
        <dbReference type="SAM" id="MobiDB-lite"/>
    </source>
</evidence>
<evidence type="ECO:0000269" key="6">
    <source>
    </source>
</evidence>
<evidence type="ECO:0000269" key="7">
    <source>
    </source>
</evidence>
<evidence type="ECO:0000269" key="8">
    <source>
    </source>
</evidence>
<evidence type="ECO:0000303" key="9">
    <source>
    </source>
</evidence>
<evidence type="ECO:0000305" key="10"/>
<feature type="chain" id="PRO_0000324393" description="Probable ATP-dependent DNA helicase HFM1">
    <location>
        <begin position="1"/>
        <end position="1435"/>
    </location>
</feature>
<feature type="domain" description="Helicase ATP-binding" evidence="3">
    <location>
        <begin position="290"/>
        <end position="478"/>
    </location>
</feature>
<feature type="domain" description="Helicase C-terminal" evidence="4">
    <location>
        <begin position="519"/>
        <end position="720"/>
    </location>
</feature>
<feature type="domain" description="SEC63">
    <location>
        <begin position="777"/>
        <end position="1092"/>
    </location>
</feature>
<feature type="zinc finger region" description="C4-type" evidence="2">
    <location>
        <begin position="1143"/>
        <end position="1158"/>
    </location>
</feature>
<feature type="region of interest" description="Disordered" evidence="5">
    <location>
        <begin position="1109"/>
        <end position="1139"/>
    </location>
</feature>
<feature type="region of interest" description="Disordered" evidence="5">
    <location>
        <begin position="1295"/>
        <end position="1315"/>
    </location>
</feature>
<feature type="short sequence motif" description="DEAH box">
    <location>
        <begin position="411"/>
        <end position="414"/>
    </location>
</feature>
<feature type="compositionally biased region" description="Polar residues" evidence="5">
    <location>
        <begin position="1296"/>
        <end position="1306"/>
    </location>
</feature>
<feature type="binding site" evidence="3">
    <location>
        <begin position="303"/>
        <end position="310"/>
    </location>
    <ligand>
        <name>ATP</name>
        <dbReference type="ChEBI" id="CHEBI:30616"/>
    </ligand>
</feature>
<feature type="splice variant" id="VSP_032249" description="In isoform 2." evidence="9">
    <location>
        <begin position="1"/>
        <end position="768"/>
    </location>
</feature>
<feature type="splice variant" id="VSP_032250" description="In isoform 2." evidence="9">
    <original>GFGNTLSSSTRGSKLPLQESKSKFQREMSNSFVSSHEMSDISLSNSAMPKFSASSMTKLPQQAGNAVIVHFQERKPQNLSPEIEKQCFTFSEKNPNSSNYKKVDFFIRNSECKKEVDFSMYHPD</original>
    <variation>VLFHHMRCRIFLYQILLCPSSVHPP</variation>
    <location>
        <begin position="1295"/>
        <end position="1418"/>
    </location>
</feature>
<feature type="splice variant" id="VSP_032251" description="In isoform 2." evidence="9">
    <location>
        <begin position="1419"/>
        <end position="1435"/>
    </location>
</feature>
<feature type="sequence variant" id="VAR_039799" description="In dbSNP:rs11165778." evidence="6">
    <original>S</original>
    <variation>P</variation>
    <location>
        <position position="115"/>
    </location>
</feature>
<feature type="sequence variant" id="VAR_039800" description="In dbSNP:rs282009." evidence="6">
    <original>I</original>
    <variation>V</variation>
    <location>
        <position position="117"/>
    </location>
</feature>
<feature type="sequence variant" id="VAR_071262" description="In POF9; dbSNP:rs587777269." evidence="7">
    <original>G</original>
    <variation>S</variation>
    <location>
        <position position="736"/>
    </location>
</feature>
<feature type="sequence variant" id="VAR_089837" description="In POF9; likely pathogenic." evidence="8">
    <location>
        <begin position="804"/>
        <end position="1435"/>
    </location>
</feature>
<feature type="sequence variant" id="VAR_071263" description="In POF9; dbSNP:rs587777268." evidence="7">
    <original>I</original>
    <variation>S</variation>
    <location>
        <position position="884"/>
    </location>
</feature>
<feature type="sequence variant" id="VAR_049338" description="In dbSNP:rs11584478.">
    <original>I</original>
    <variation>V</variation>
    <location>
        <position position="939"/>
    </location>
</feature>
<feature type="sequence conflict" description="In Ref. 1; BAF45466." evidence="10" ref="1">
    <original>F</original>
    <variation>L</variation>
    <location>
        <position position="408"/>
    </location>
</feature>
<feature type="sequence conflict" description="In Ref. 1; BAF45466." evidence="10" ref="1">
    <original>C</original>
    <variation>Y</variation>
    <location>
        <position position="684"/>
    </location>
</feature>
<protein>
    <recommendedName>
        <fullName>Probable ATP-dependent DNA helicase HFM1</fullName>
        <ecNumber evidence="2">5.6.2.4</ecNumber>
    </recommendedName>
    <alternativeName>
        <fullName evidence="10">DNA 3'-5' helicase HFM1</fullName>
    </alternativeName>
    <alternativeName>
        <fullName>SEC63 domain-containing protein 1</fullName>
    </alternativeName>
</protein>
<reference key="1">
    <citation type="journal article" date="2006" name="DNA Seq.">
        <title>HFM1, the human homologue of yeast Mer3, encodes a putative DNA helicase expressed specifically in germ-line cells.</title>
        <authorList>
            <person name="Tanaka K."/>
            <person name="Miyamoto N."/>
            <person name="Shouguchi-Miyata J."/>
            <person name="Ikeda J.E."/>
        </authorList>
    </citation>
    <scope>NUCLEOTIDE SEQUENCE [MRNA] (ISOFORM 1)</scope>
    <scope>TISSUE SPECIFICITY</scope>
    <scope>VARIANTS PRO-115 AND VAL-117</scope>
</reference>
<reference key="2">
    <citation type="journal article" date="2004" name="Nat. Genet.">
        <title>Complete sequencing and characterization of 21,243 full-length human cDNAs.</title>
        <authorList>
            <person name="Ota T."/>
            <person name="Suzuki Y."/>
            <person name="Nishikawa T."/>
            <person name="Otsuki T."/>
            <person name="Sugiyama T."/>
            <person name="Irie R."/>
            <person name="Wakamatsu A."/>
            <person name="Hayashi K."/>
            <person name="Sato H."/>
            <person name="Nagai K."/>
            <person name="Kimura K."/>
            <person name="Makita H."/>
            <person name="Sekine M."/>
            <person name="Obayashi M."/>
            <person name="Nishi T."/>
            <person name="Shibahara T."/>
            <person name="Tanaka T."/>
            <person name="Ishii S."/>
            <person name="Yamamoto J."/>
            <person name="Saito K."/>
            <person name="Kawai Y."/>
            <person name="Isono Y."/>
            <person name="Nakamura Y."/>
            <person name="Nagahari K."/>
            <person name="Murakami K."/>
            <person name="Yasuda T."/>
            <person name="Iwayanagi T."/>
            <person name="Wagatsuma M."/>
            <person name="Shiratori A."/>
            <person name="Sudo H."/>
            <person name="Hosoiri T."/>
            <person name="Kaku Y."/>
            <person name="Kodaira H."/>
            <person name="Kondo H."/>
            <person name="Sugawara M."/>
            <person name="Takahashi M."/>
            <person name="Kanda K."/>
            <person name="Yokoi T."/>
            <person name="Furuya T."/>
            <person name="Kikkawa E."/>
            <person name="Omura Y."/>
            <person name="Abe K."/>
            <person name="Kamihara K."/>
            <person name="Katsuta N."/>
            <person name="Sato K."/>
            <person name="Tanikawa M."/>
            <person name="Yamazaki M."/>
            <person name="Ninomiya K."/>
            <person name="Ishibashi T."/>
            <person name="Yamashita H."/>
            <person name="Murakawa K."/>
            <person name="Fujimori K."/>
            <person name="Tanai H."/>
            <person name="Kimata M."/>
            <person name="Watanabe M."/>
            <person name="Hiraoka S."/>
            <person name="Chiba Y."/>
            <person name="Ishida S."/>
            <person name="Ono Y."/>
            <person name="Takiguchi S."/>
            <person name="Watanabe S."/>
            <person name="Yosida M."/>
            <person name="Hotuta T."/>
            <person name="Kusano J."/>
            <person name="Kanehori K."/>
            <person name="Takahashi-Fujii A."/>
            <person name="Hara H."/>
            <person name="Tanase T.-O."/>
            <person name="Nomura Y."/>
            <person name="Togiya S."/>
            <person name="Komai F."/>
            <person name="Hara R."/>
            <person name="Takeuchi K."/>
            <person name="Arita M."/>
            <person name="Imose N."/>
            <person name="Musashino K."/>
            <person name="Yuuki H."/>
            <person name="Oshima A."/>
            <person name="Sasaki N."/>
            <person name="Aotsuka S."/>
            <person name="Yoshikawa Y."/>
            <person name="Matsunawa H."/>
            <person name="Ichihara T."/>
            <person name="Shiohata N."/>
            <person name="Sano S."/>
            <person name="Moriya S."/>
            <person name="Momiyama H."/>
            <person name="Satoh N."/>
            <person name="Takami S."/>
            <person name="Terashima Y."/>
            <person name="Suzuki O."/>
            <person name="Nakagawa S."/>
            <person name="Senoh A."/>
            <person name="Mizoguchi H."/>
            <person name="Goto Y."/>
            <person name="Shimizu F."/>
            <person name="Wakebe H."/>
            <person name="Hishigaki H."/>
            <person name="Watanabe T."/>
            <person name="Sugiyama A."/>
            <person name="Takemoto M."/>
            <person name="Kawakami B."/>
            <person name="Yamazaki M."/>
            <person name="Watanabe K."/>
            <person name="Kumagai A."/>
            <person name="Itakura S."/>
            <person name="Fukuzumi Y."/>
            <person name="Fujimori Y."/>
            <person name="Komiyama M."/>
            <person name="Tashiro H."/>
            <person name="Tanigami A."/>
            <person name="Fujiwara T."/>
            <person name="Ono T."/>
            <person name="Yamada K."/>
            <person name="Fujii Y."/>
            <person name="Ozaki K."/>
            <person name="Hirao M."/>
            <person name="Ohmori Y."/>
            <person name="Kawabata A."/>
            <person name="Hikiji T."/>
            <person name="Kobatake N."/>
            <person name="Inagaki H."/>
            <person name="Ikema Y."/>
            <person name="Okamoto S."/>
            <person name="Okitani R."/>
            <person name="Kawakami T."/>
            <person name="Noguchi S."/>
            <person name="Itoh T."/>
            <person name="Shigeta K."/>
            <person name="Senba T."/>
            <person name="Matsumura K."/>
            <person name="Nakajima Y."/>
            <person name="Mizuno T."/>
            <person name="Morinaga M."/>
            <person name="Sasaki M."/>
            <person name="Togashi T."/>
            <person name="Oyama M."/>
            <person name="Hata H."/>
            <person name="Watanabe M."/>
            <person name="Komatsu T."/>
            <person name="Mizushima-Sugano J."/>
            <person name="Satoh T."/>
            <person name="Shirai Y."/>
            <person name="Takahashi Y."/>
            <person name="Nakagawa K."/>
            <person name="Okumura K."/>
            <person name="Nagase T."/>
            <person name="Nomura N."/>
            <person name="Kikuchi H."/>
            <person name="Masuho Y."/>
            <person name="Yamashita R."/>
            <person name="Nakai K."/>
            <person name="Yada T."/>
            <person name="Nakamura Y."/>
            <person name="Ohara O."/>
            <person name="Isogai T."/>
            <person name="Sugano S."/>
        </authorList>
    </citation>
    <scope>NUCLEOTIDE SEQUENCE [LARGE SCALE MRNA] (ISOFORM 2)</scope>
    <source>
        <tissue>Uterus</tissue>
    </source>
</reference>
<reference key="3">
    <citation type="journal article" date="2006" name="Nature">
        <title>The DNA sequence and biological annotation of human chromosome 1.</title>
        <authorList>
            <person name="Gregory S.G."/>
            <person name="Barlow K.F."/>
            <person name="McLay K.E."/>
            <person name="Kaul R."/>
            <person name="Swarbreck D."/>
            <person name="Dunham A."/>
            <person name="Scott C.E."/>
            <person name="Howe K.L."/>
            <person name="Woodfine K."/>
            <person name="Spencer C.C.A."/>
            <person name="Jones M.C."/>
            <person name="Gillson C."/>
            <person name="Searle S."/>
            <person name="Zhou Y."/>
            <person name="Kokocinski F."/>
            <person name="McDonald L."/>
            <person name="Evans R."/>
            <person name="Phillips K."/>
            <person name="Atkinson A."/>
            <person name="Cooper R."/>
            <person name="Jones C."/>
            <person name="Hall R.E."/>
            <person name="Andrews T.D."/>
            <person name="Lloyd C."/>
            <person name="Ainscough R."/>
            <person name="Almeida J.P."/>
            <person name="Ambrose K.D."/>
            <person name="Anderson F."/>
            <person name="Andrew R.W."/>
            <person name="Ashwell R.I.S."/>
            <person name="Aubin K."/>
            <person name="Babbage A.K."/>
            <person name="Bagguley C.L."/>
            <person name="Bailey J."/>
            <person name="Beasley H."/>
            <person name="Bethel G."/>
            <person name="Bird C.P."/>
            <person name="Bray-Allen S."/>
            <person name="Brown J.Y."/>
            <person name="Brown A.J."/>
            <person name="Buckley D."/>
            <person name="Burton J."/>
            <person name="Bye J."/>
            <person name="Carder C."/>
            <person name="Chapman J.C."/>
            <person name="Clark S.Y."/>
            <person name="Clarke G."/>
            <person name="Clee C."/>
            <person name="Cobley V."/>
            <person name="Collier R.E."/>
            <person name="Corby N."/>
            <person name="Coville G.J."/>
            <person name="Davies J."/>
            <person name="Deadman R."/>
            <person name="Dunn M."/>
            <person name="Earthrowl M."/>
            <person name="Ellington A.G."/>
            <person name="Errington H."/>
            <person name="Frankish A."/>
            <person name="Frankland J."/>
            <person name="French L."/>
            <person name="Garner P."/>
            <person name="Garnett J."/>
            <person name="Gay L."/>
            <person name="Ghori M.R.J."/>
            <person name="Gibson R."/>
            <person name="Gilby L.M."/>
            <person name="Gillett W."/>
            <person name="Glithero R.J."/>
            <person name="Grafham D.V."/>
            <person name="Griffiths C."/>
            <person name="Griffiths-Jones S."/>
            <person name="Grocock R."/>
            <person name="Hammond S."/>
            <person name="Harrison E.S.I."/>
            <person name="Hart E."/>
            <person name="Haugen E."/>
            <person name="Heath P.D."/>
            <person name="Holmes S."/>
            <person name="Holt K."/>
            <person name="Howden P.J."/>
            <person name="Hunt A.R."/>
            <person name="Hunt S.E."/>
            <person name="Hunter G."/>
            <person name="Isherwood J."/>
            <person name="James R."/>
            <person name="Johnson C."/>
            <person name="Johnson D."/>
            <person name="Joy A."/>
            <person name="Kay M."/>
            <person name="Kershaw J.K."/>
            <person name="Kibukawa M."/>
            <person name="Kimberley A.M."/>
            <person name="King A."/>
            <person name="Knights A.J."/>
            <person name="Lad H."/>
            <person name="Laird G."/>
            <person name="Lawlor S."/>
            <person name="Leongamornlert D.A."/>
            <person name="Lloyd D.M."/>
            <person name="Loveland J."/>
            <person name="Lovell J."/>
            <person name="Lush M.J."/>
            <person name="Lyne R."/>
            <person name="Martin S."/>
            <person name="Mashreghi-Mohammadi M."/>
            <person name="Matthews L."/>
            <person name="Matthews N.S.W."/>
            <person name="McLaren S."/>
            <person name="Milne S."/>
            <person name="Mistry S."/>
            <person name="Moore M.J.F."/>
            <person name="Nickerson T."/>
            <person name="O'Dell C.N."/>
            <person name="Oliver K."/>
            <person name="Palmeiri A."/>
            <person name="Palmer S.A."/>
            <person name="Parker A."/>
            <person name="Patel D."/>
            <person name="Pearce A.V."/>
            <person name="Peck A.I."/>
            <person name="Pelan S."/>
            <person name="Phelps K."/>
            <person name="Phillimore B.J."/>
            <person name="Plumb R."/>
            <person name="Rajan J."/>
            <person name="Raymond C."/>
            <person name="Rouse G."/>
            <person name="Saenphimmachak C."/>
            <person name="Sehra H.K."/>
            <person name="Sheridan E."/>
            <person name="Shownkeen R."/>
            <person name="Sims S."/>
            <person name="Skuce C.D."/>
            <person name="Smith M."/>
            <person name="Steward C."/>
            <person name="Subramanian S."/>
            <person name="Sycamore N."/>
            <person name="Tracey A."/>
            <person name="Tromans A."/>
            <person name="Van Helmond Z."/>
            <person name="Wall M."/>
            <person name="Wallis J.M."/>
            <person name="White S."/>
            <person name="Whitehead S.L."/>
            <person name="Wilkinson J.E."/>
            <person name="Willey D.L."/>
            <person name="Williams H."/>
            <person name="Wilming L."/>
            <person name="Wray P.W."/>
            <person name="Wu Z."/>
            <person name="Coulson A."/>
            <person name="Vaudin M."/>
            <person name="Sulston J.E."/>
            <person name="Durbin R.M."/>
            <person name="Hubbard T."/>
            <person name="Wooster R."/>
            <person name="Dunham I."/>
            <person name="Carter N.P."/>
            <person name="McVean G."/>
            <person name="Ross M.T."/>
            <person name="Harrow J."/>
            <person name="Olson M.V."/>
            <person name="Beck S."/>
            <person name="Rogers J."/>
            <person name="Bentley D.R."/>
        </authorList>
    </citation>
    <scope>NUCLEOTIDE SEQUENCE [LARGE SCALE GENOMIC DNA]</scope>
</reference>
<reference key="4">
    <citation type="journal article" date="2014" name="N. Engl. J. Med.">
        <title>Mutations in HFM1 in recessive primary ovarian insufficiency.</title>
        <authorList>
            <person name="Wang J."/>
            <person name="Zhang W."/>
            <person name="Jiang H."/>
            <person name="Wu B.L."/>
            <person name="Wu B.L."/>
            <person name="An Y."/>
            <person name="Wu B."/>
            <person name="Yu L."/>
            <person name="Zhou W."/>
            <person name="Jiang H."/>
            <person name="Zhang W."/>
            <person name="Song X."/>
            <person name="Zhang W."/>
            <person name="Jiang H."/>
            <person name="Wu J."/>
            <person name="Pu D."/>
            <person name="Zhang M."/>
            <person name="Wu B.L."/>
            <person name="Shen Y."/>
            <person name="Wu B.L."/>
            <person name="Wang J."/>
            <person name="Zhang W."/>
            <person name="Shen Y."/>
            <person name="Lin C."/>
            <person name="Grimmett L."/>
            <person name="Liao E."/>
            <person name="Shao H."/>
            <person name="Shen X."/>
            <person name="Platt O."/>
        </authorList>
    </citation>
    <scope>INVOLVEMENT IN POF9</scope>
    <scope>VARIANTS POF9 SER-736 AND SER-884</scope>
</reference>
<reference key="5">
    <citation type="journal article" date="2022" name="Eur. J. Hum. Genet.">
        <title>Meiotic genes in premature ovarian insufficiency: variants in HROB and REC8 as likely genetic causes.</title>
        <authorList>
            <person name="Tucker E.J."/>
            <person name="Bell K.M."/>
            <person name="Robevska G."/>
            <person name="van den Bergen J."/>
            <person name="Ayers K.L."/>
            <person name="Listyasari N."/>
            <person name="Faradz S.M."/>
            <person name="Dulon J."/>
            <person name="Bakhshalizadeh S."/>
            <person name="Sreenivasan R."/>
            <person name="Nouyou B."/>
            <person name="Carre W."/>
            <person name="Akloul L."/>
            <person name="Duros S."/>
            <person name="Domin-Bernhard M."/>
            <person name="Belaud-Rotureau M.A."/>
            <person name="Touraine P."/>
            <person name="Jaillard S."/>
            <person name="Sinclair A.H."/>
        </authorList>
    </citation>
    <scope>VARIANT POF9 804-GLU--PHE-1435 DEL</scope>
    <scope>INVOLVEMENT IN POF9</scope>
</reference>
<comment type="function">
    <text evidence="1">Required for crossover formation and complete synapsis of homologous chromosomes during meiosis.</text>
</comment>
<comment type="catalytic activity">
    <reaction evidence="2">
        <text>Couples ATP hydrolysis with the unwinding of duplex DNA by translocating in the 3'-5' direction.</text>
        <dbReference type="EC" id="5.6.2.4"/>
    </reaction>
</comment>
<comment type="catalytic activity">
    <reaction evidence="2">
        <text>ATP + H2O = ADP + phosphate + H(+)</text>
        <dbReference type="Rhea" id="RHEA:13065"/>
        <dbReference type="ChEBI" id="CHEBI:15377"/>
        <dbReference type="ChEBI" id="CHEBI:15378"/>
        <dbReference type="ChEBI" id="CHEBI:30616"/>
        <dbReference type="ChEBI" id="CHEBI:43474"/>
        <dbReference type="ChEBI" id="CHEBI:456216"/>
        <dbReference type="EC" id="5.6.2.4"/>
    </reaction>
</comment>
<comment type="cofactor">
    <cofactor evidence="2">
        <name>Zn(2+)</name>
        <dbReference type="ChEBI" id="CHEBI:29105"/>
    </cofactor>
    <text evidence="2">Might have a zinc-finger.</text>
</comment>
<comment type="alternative products">
    <event type="alternative splicing"/>
    <isoform>
        <id>A2PYH4-1</id>
        <name>1</name>
        <sequence type="displayed"/>
    </isoform>
    <isoform>
        <id>A2PYH4-2</id>
        <name>2</name>
        <sequence type="described" ref="VSP_032249 VSP_032250 VSP_032251"/>
    </isoform>
</comment>
<comment type="tissue specificity">
    <text evidence="6">Preferentially expressed in testis and ovary.</text>
</comment>
<comment type="disease" evidence="7 8">
    <disease id="DI-04070">
        <name>Premature ovarian failure 9</name>
        <acronym>POF9</acronym>
        <description>An ovarian disorder defined as the cessation of ovarian function under the age of 40 years. It is characterized by oligomenorrhea or amenorrhea, in the presence of elevated levels of serum gonadotropins and low estradiol.</description>
        <dbReference type="MIM" id="615724"/>
    </disease>
    <text>The disease may be caused by variants affecting the gene represented in this entry.</text>
</comment>
<comment type="similarity">
    <text evidence="10">Belongs to the helicase family. SKI2 subfamily.</text>
</comment>
<organism>
    <name type="scientific">Homo sapiens</name>
    <name type="common">Human</name>
    <dbReference type="NCBI Taxonomy" id="9606"/>
    <lineage>
        <taxon>Eukaryota</taxon>
        <taxon>Metazoa</taxon>
        <taxon>Chordata</taxon>
        <taxon>Craniata</taxon>
        <taxon>Vertebrata</taxon>
        <taxon>Euteleostomi</taxon>
        <taxon>Mammalia</taxon>
        <taxon>Eutheria</taxon>
        <taxon>Euarchontoglires</taxon>
        <taxon>Primates</taxon>
        <taxon>Haplorrhini</taxon>
        <taxon>Catarrhini</taxon>
        <taxon>Hominidae</taxon>
        <taxon>Homo</taxon>
    </lineage>
</organism>
<keyword id="KW-0025">Alternative splicing</keyword>
<keyword id="KW-0067">ATP-binding</keyword>
<keyword id="KW-0225">Disease variant</keyword>
<keyword id="KW-0347">Helicase</keyword>
<keyword id="KW-0378">Hydrolase</keyword>
<keyword id="KW-0413">Isomerase</keyword>
<keyword id="KW-0469">Meiosis</keyword>
<keyword id="KW-0479">Metal-binding</keyword>
<keyword id="KW-0547">Nucleotide-binding</keyword>
<keyword id="KW-1066">Premature ovarian failure</keyword>
<keyword id="KW-1267">Proteomics identification</keyword>
<keyword id="KW-1185">Reference proteome</keyword>
<keyword id="KW-0862">Zinc</keyword>
<keyword id="KW-0863">Zinc-finger</keyword>
<name>HFM1_HUMAN</name>
<dbReference type="EC" id="5.6.2.4" evidence="2"/>
<dbReference type="EMBL" id="AB204867">
    <property type="protein sequence ID" value="BAF45466.1"/>
    <property type="molecule type" value="mRNA"/>
</dbReference>
<dbReference type="EMBL" id="AK094079">
    <property type="protein sequence ID" value="BAC04281.1"/>
    <property type="molecule type" value="mRNA"/>
</dbReference>
<dbReference type="EMBL" id="AC098691">
    <property type="status" value="NOT_ANNOTATED_CDS"/>
    <property type="molecule type" value="Genomic_DNA"/>
</dbReference>
<dbReference type="EMBL" id="BX323048">
    <property type="status" value="NOT_ANNOTATED_CDS"/>
    <property type="molecule type" value="Genomic_DNA"/>
</dbReference>
<dbReference type="CCDS" id="CCDS30769.2">
    <molecule id="A2PYH4-1"/>
</dbReference>
<dbReference type="RefSeq" id="NP_001017975.5">
    <molecule id="A2PYH4-1"/>
    <property type="nucleotide sequence ID" value="NM_001017975.6"/>
</dbReference>
<dbReference type="RefSeq" id="XP_011539151.1">
    <molecule id="A2PYH4-1"/>
    <property type="nucleotide sequence ID" value="XM_011540849.2"/>
</dbReference>
<dbReference type="RefSeq" id="XP_011539152.1">
    <molecule id="A2PYH4-1"/>
    <property type="nucleotide sequence ID" value="XM_011540850.3"/>
</dbReference>
<dbReference type="RefSeq" id="XP_011539153.1">
    <molecule id="A2PYH4-1"/>
    <property type="nucleotide sequence ID" value="XM_011540851.2"/>
</dbReference>
<dbReference type="RefSeq" id="XP_011539154.1">
    <molecule id="A2PYH4-1"/>
    <property type="nucleotide sequence ID" value="XM_011540852.3"/>
</dbReference>
<dbReference type="SMR" id="A2PYH4"/>
<dbReference type="BioGRID" id="127886">
    <property type="interactions" value="126"/>
</dbReference>
<dbReference type="FunCoup" id="A2PYH4">
    <property type="interactions" value="868"/>
</dbReference>
<dbReference type="STRING" id="9606.ENSP00000359454"/>
<dbReference type="GlyGen" id="A2PYH4">
    <property type="glycosylation" value="1 site, 1 O-linked glycan (1 site)"/>
</dbReference>
<dbReference type="iPTMnet" id="A2PYH4"/>
<dbReference type="PhosphoSitePlus" id="A2PYH4"/>
<dbReference type="BioMuta" id="HFM1"/>
<dbReference type="jPOST" id="A2PYH4"/>
<dbReference type="MassIVE" id="A2PYH4"/>
<dbReference type="PaxDb" id="9606-ENSP00000359454"/>
<dbReference type="PeptideAtlas" id="A2PYH4"/>
<dbReference type="ProteomicsDB" id="456">
    <molecule id="A2PYH4-1"/>
</dbReference>
<dbReference type="ProteomicsDB" id="457">
    <molecule id="A2PYH4-2"/>
</dbReference>
<dbReference type="Antibodypedia" id="51797">
    <property type="antibodies" value="111 antibodies from 19 providers"/>
</dbReference>
<dbReference type="DNASU" id="164045"/>
<dbReference type="Ensembl" id="ENST00000370425.8">
    <molecule id="A2PYH4-1"/>
    <property type="protein sequence ID" value="ENSP00000359454.3"/>
    <property type="gene ID" value="ENSG00000162669.16"/>
</dbReference>
<dbReference type="GeneID" id="164045"/>
<dbReference type="KEGG" id="hsa:164045"/>
<dbReference type="MANE-Select" id="ENST00000370425.8">
    <property type="protein sequence ID" value="ENSP00000359454.3"/>
    <property type="RefSeq nucleotide sequence ID" value="NM_001017975.6"/>
    <property type="RefSeq protein sequence ID" value="NP_001017975.5"/>
</dbReference>
<dbReference type="UCSC" id="uc001doa.4">
    <molecule id="A2PYH4-1"/>
    <property type="organism name" value="human"/>
</dbReference>
<dbReference type="AGR" id="HGNC:20193"/>
<dbReference type="CTD" id="164045"/>
<dbReference type="DisGeNET" id="164045"/>
<dbReference type="GeneCards" id="HFM1"/>
<dbReference type="HGNC" id="HGNC:20193">
    <property type="gene designation" value="HFM1"/>
</dbReference>
<dbReference type="HPA" id="ENSG00000162669">
    <property type="expression patterns" value="Tissue enhanced (pituitary gland, testis)"/>
</dbReference>
<dbReference type="MalaCards" id="HFM1"/>
<dbReference type="MIM" id="615684">
    <property type="type" value="gene"/>
</dbReference>
<dbReference type="MIM" id="615724">
    <property type="type" value="phenotype"/>
</dbReference>
<dbReference type="neXtProt" id="NX_A2PYH4"/>
<dbReference type="OpenTargets" id="ENSG00000162669"/>
<dbReference type="PharmGKB" id="PA142671690"/>
<dbReference type="VEuPathDB" id="HostDB:ENSG00000162669"/>
<dbReference type="eggNOG" id="KOG0952">
    <property type="taxonomic scope" value="Eukaryota"/>
</dbReference>
<dbReference type="GeneTree" id="ENSGT00550000074822"/>
<dbReference type="HOGENOM" id="CLU_000335_0_0_1"/>
<dbReference type="InParanoid" id="A2PYH4"/>
<dbReference type="OMA" id="HCKNKHT"/>
<dbReference type="OrthoDB" id="5575at2759"/>
<dbReference type="PAN-GO" id="A2PYH4">
    <property type="GO annotations" value="3 GO annotations based on evolutionary models"/>
</dbReference>
<dbReference type="PhylomeDB" id="A2PYH4"/>
<dbReference type="TreeFam" id="TF328936"/>
<dbReference type="PathwayCommons" id="A2PYH4"/>
<dbReference type="BioGRID-ORCS" id="164045">
    <property type="hits" value="9 hits in 1141 CRISPR screens"/>
</dbReference>
<dbReference type="ChiTaRS" id="HFM1">
    <property type="organism name" value="human"/>
</dbReference>
<dbReference type="GenomeRNAi" id="164045"/>
<dbReference type="Pharos" id="A2PYH4">
    <property type="development level" value="Tbio"/>
</dbReference>
<dbReference type="PRO" id="PR:A2PYH4"/>
<dbReference type="Proteomes" id="UP000005640">
    <property type="component" value="Chromosome 1"/>
</dbReference>
<dbReference type="RNAct" id="A2PYH4">
    <property type="molecule type" value="protein"/>
</dbReference>
<dbReference type="Bgee" id="ENSG00000162669">
    <property type="expression patterns" value="Expressed in male germ line stem cell (sensu Vertebrata) in testis and 101 other cell types or tissues"/>
</dbReference>
<dbReference type="ExpressionAtlas" id="A2PYH4">
    <property type="expression patterns" value="baseline and differential"/>
</dbReference>
<dbReference type="GO" id="GO:0005634">
    <property type="term" value="C:nucleus"/>
    <property type="evidence" value="ECO:0000318"/>
    <property type="project" value="GO_Central"/>
</dbReference>
<dbReference type="GO" id="GO:0005524">
    <property type="term" value="F:ATP binding"/>
    <property type="evidence" value="ECO:0007669"/>
    <property type="project" value="UniProtKB-KW"/>
</dbReference>
<dbReference type="GO" id="GO:0016887">
    <property type="term" value="F:ATP hydrolysis activity"/>
    <property type="evidence" value="ECO:0007669"/>
    <property type="project" value="RHEA"/>
</dbReference>
<dbReference type="GO" id="GO:0003678">
    <property type="term" value="F:DNA helicase activity"/>
    <property type="evidence" value="ECO:0000318"/>
    <property type="project" value="GO_Central"/>
</dbReference>
<dbReference type="GO" id="GO:0003676">
    <property type="term" value="F:nucleic acid binding"/>
    <property type="evidence" value="ECO:0007669"/>
    <property type="project" value="InterPro"/>
</dbReference>
<dbReference type="GO" id="GO:0000712">
    <property type="term" value="P:resolution of meiotic recombination intermediates"/>
    <property type="evidence" value="ECO:0000318"/>
    <property type="project" value="GO_Central"/>
</dbReference>
<dbReference type="CDD" id="cd18023">
    <property type="entry name" value="DEXHc_HFM1"/>
    <property type="match status" value="1"/>
</dbReference>
<dbReference type="CDD" id="cd18795">
    <property type="entry name" value="SF2_C_Ski2"/>
    <property type="match status" value="1"/>
</dbReference>
<dbReference type="FunFam" id="3.40.50.300:FF:001076">
    <property type="entry name" value="ATP-dependent DNA helicase MER3"/>
    <property type="match status" value="1"/>
</dbReference>
<dbReference type="FunFam" id="3.40.50.300:FF:000950">
    <property type="entry name" value="probable ATP-dependent DNA helicase HFM1"/>
    <property type="match status" value="1"/>
</dbReference>
<dbReference type="FunFam" id="1.10.3380.10:FF:000006">
    <property type="entry name" value="probable ATP-dependent DNA helicase HFM1 isoform X1"/>
    <property type="match status" value="1"/>
</dbReference>
<dbReference type="FunFam" id="1.10.10.10:FF:000012">
    <property type="entry name" value="U5 small nuclear ribonucleoprotein helicase"/>
    <property type="match status" value="1"/>
</dbReference>
<dbReference type="Gene3D" id="3.40.50.300">
    <property type="entry name" value="P-loop containing nucleotide triphosphate hydrolases"/>
    <property type="match status" value="2"/>
</dbReference>
<dbReference type="Gene3D" id="1.10.3380.10">
    <property type="entry name" value="Sec63 N-terminal domain-like domain"/>
    <property type="match status" value="1"/>
</dbReference>
<dbReference type="Gene3D" id="1.10.10.10">
    <property type="entry name" value="Winged helix-like DNA-binding domain superfamily/Winged helix DNA-binding domain"/>
    <property type="match status" value="1"/>
</dbReference>
<dbReference type="InterPro" id="IPR011545">
    <property type="entry name" value="DEAD/DEAH_box_helicase_dom"/>
</dbReference>
<dbReference type="InterPro" id="IPR014001">
    <property type="entry name" value="Helicase_ATP-bd"/>
</dbReference>
<dbReference type="InterPro" id="IPR001650">
    <property type="entry name" value="Helicase_C-like"/>
</dbReference>
<dbReference type="InterPro" id="IPR052247">
    <property type="entry name" value="Meiotic_Crossover_Helicase"/>
</dbReference>
<dbReference type="InterPro" id="IPR027417">
    <property type="entry name" value="P-loop_NTPase"/>
</dbReference>
<dbReference type="InterPro" id="IPR004179">
    <property type="entry name" value="Sec63-dom"/>
</dbReference>
<dbReference type="InterPro" id="IPR036388">
    <property type="entry name" value="WH-like_DNA-bd_sf"/>
</dbReference>
<dbReference type="InterPro" id="IPR036390">
    <property type="entry name" value="WH_DNA-bd_sf"/>
</dbReference>
<dbReference type="PANTHER" id="PTHR47835:SF3">
    <property type="entry name" value="HELICASE FOR MEIOSIS 1"/>
    <property type="match status" value="1"/>
</dbReference>
<dbReference type="PANTHER" id="PTHR47835">
    <property type="entry name" value="HFM1, ATP DEPENDENT DNA HELICASE HOMOLOG"/>
    <property type="match status" value="1"/>
</dbReference>
<dbReference type="Pfam" id="PF00270">
    <property type="entry name" value="DEAD"/>
    <property type="match status" value="1"/>
</dbReference>
<dbReference type="Pfam" id="PF00271">
    <property type="entry name" value="Helicase_C"/>
    <property type="match status" value="1"/>
</dbReference>
<dbReference type="Pfam" id="PF02889">
    <property type="entry name" value="Sec63"/>
    <property type="match status" value="1"/>
</dbReference>
<dbReference type="Pfam" id="PF23445">
    <property type="entry name" value="SNRNP200_wHTH"/>
    <property type="match status" value="1"/>
</dbReference>
<dbReference type="SMART" id="SM00487">
    <property type="entry name" value="DEXDc"/>
    <property type="match status" value="1"/>
</dbReference>
<dbReference type="SMART" id="SM00490">
    <property type="entry name" value="HELICc"/>
    <property type="match status" value="1"/>
</dbReference>
<dbReference type="SMART" id="SM00973">
    <property type="entry name" value="Sec63"/>
    <property type="match status" value="1"/>
</dbReference>
<dbReference type="SUPFAM" id="SSF52540">
    <property type="entry name" value="P-loop containing nucleoside triphosphate hydrolases"/>
    <property type="match status" value="1"/>
</dbReference>
<dbReference type="SUPFAM" id="SSF158702">
    <property type="entry name" value="Sec63 N-terminal domain-like"/>
    <property type="match status" value="1"/>
</dbReference>
<dbReference type="SUPFAM" id="SSF46785">
    <property type="entry name" value="Winged helix' DNA-binding domain"/>
    <property type="match status" value="1"/>
</dbReference>
<dbReference type="PROSITE" id="PS51192">
    <property type="entry name" value="HELICASE_ATP_BIND_1"/>
    <property type="match status" value="1"/>
</dbReference>
<dbReference type="PROSITE" id="PS51194">
    <property type="entry name" value="HELICASE_CTER"/>
    <property type="match status" value="1"/>
</dbReference>
<gene>
    <name type="primary">HFM1</name>
    <name type="synonym">SEC3D1</name>
</gene>
<proteinExistence type="evidence at protein level"/>
<sequence length="1435" mass="162610">MLKSNDCLFSLENLFFEKPDEVENHPDNEKSLDWFLPPAPLISEIPDTQELEEELESHKLLGQEKRPKMLTSNLKITNEDTNYISLTQKFQFAFPSDKYEQDDLNLEGVGNNDLSHIAGKLTYASQKYKNHIGTEIAPEKSVPDDTKLVNFAEDKGESTSVFRKRLFKISDNIHGSAYSNDNELDSHIGSVKIVQTEMNKGKSRNYSNSKQKFQYSANVFTANNAFSASEIGEGMFKAPSFSVAFQPHDIQEVTENGLGSLKAVTEIPAKFRSIFKEFPYFNYIQSKAFDDLLYTDRNFVICAPTGSGKTVVFELAITRLLMEVPLPWLNIKIVYMAPIKALCSQRFDDWKEKFGPIGLNCKELTGDTVMDDLFEIQHAHIIMTTPEKWDSMTRKWRDNSLVQLVRLFLIDEVHIVKDENRGPTLEVVVSRMKTVQSVSQTLKNTSTAIPMRFVAVSATIPNAEDIAEWLSDGERPAVCLKMDESHRPVKLQKVVLGFPCSSNQTEFKFDLTLNYKIASVIQMYSDQKPTLVFCATRKGVQQAASVLVKDAKFIMTVEQKQRLQKYAYSVRDSKLRDILKDGAAYHHAGMELSDRKVVEGAFTVGDLPVLFTTSTLAMGVNLPAHLVVIKSTMHYAGGLFEEYSETDILQMIGRAGRPQFDTTATAVIMTRLSTRDKYIQMLACRDTVESSLHRHLIEHLNAEIVLHTITDVNIAVEWIRSTLLYIRALKNPSHYGFASGLNKDGIEAKLQELCLKNLNDLSSLDLIKMDEGVNFKPTEAGRLMAWYYITFETVKKFYTISGKETLSDLVTLIAGCKEFLDIQLRINEKKTLNTLNKDPNRITIRFPMEGRIKTREMKVNCLIQAQLGCIPIQDFALTQDTAKIFRHGSRITRWLSDFVAAQEKKFAVLLNSLILAKCFRCKLWENSLHVSKQLEKIGITLSNAIVNAGLTSFKKIEETDARELELILNRHPPFGTQIKETVMYLPKYELKVEQITRYSDTTAEILVTVILRNFEQLQTKRTASDSHYVTLIIGDADNQVVYLHKITDSVLLKAGSWAKKIAVKRALKSEDLSINLISSEFVGLDIQQKLTVFYLEPKRFGNQITMQRKSETQISHSKHSDISTIAGPNKGTTASKKPGNRECNHLCKSKHTCGHDCCKIGVAQKSEIKESTISSYLSDLRNRNAVSSVPPVKRLKIQMNKSQSVDLKEFGFTPKPSLPSISRSEYLNISELPIMEQWDQPEIYGKVRQEPSEYQDKEVLNVNFELGNEVWDDFDDENLEVTSFSTDTEKTKISGFGNTLSSSTRGSKLPLQESKSKFQREMSNSFVSSHEMSDISLSNSAMPKFSASSMTKLPQQAGNAVIVHFQERKPQNLSPEIEKQCFTFSEKNPNSSNYKKVDFFIRNSECKKEVDFSMYHPDDEADEMKSLLGIFDGIF</sequence>